<name>ASR_YERPA</name>
<proteinExistence type="inferred from homology"/>
<organism>
    <name type="scientific">Yersinia pestis bv. Antiqua (strain Antiqua)</name>
    <dbReference type="NCBI Taxonomy" id="360102"/>
    <lineage>
        <taxon>Bacteria</taxon>
        <taxon>Pseudomonadati</taxon>
        <taxon>Pseudomonadota</taxon>
        <taxon>Gammaproteobacteria</taxon>
        <taxon>Enterobacterales</taxon>
        <taxon>Yersiniaceae</taxon>
        <taxon>Yersinia</taxon>
    </lineage>
</organism>
<accession>Q1C5C7</accession>
<protein>
    <recommendedName>
        <fullName evidence="1">Acid shock protein</fullName>
    </recommendedName>
</protein>
<comment type="function">
    <text evidence="1">Required for growth and/or survival at acidic conditions.</text>
</comment>
<comment type="subcellular location">
    <subcellularLocation>
        <location evidence="1">Periplasm</location>
    </subcellularLocation>
</comment>
<comment type="PTM">
    <text evidence="1">Proteolytic processing gives rise to the active protein.</text>
</comment>
<comment type="similarity">
    <text evidence="1">Belongs to the Asr family.</text>
</comment>
<sequence length="121" mass="12580">MKKVLALMVAATLGLSSVAFAADTTATATPAATSTTATVAAQTKATQHQKHKVTKKTTEQKAQAAKKHEKKASVQKTPVQKAQAAKKHVKKASVQKAPVQKAQAAKKHHKTAKKPVAAPAA</sequence>
<feature type="signal peptide" evidence="1">
    <location>
        <begin position="1"/>
        <end position="21"/>
    </location>
</feature>
<feature type="propeptide" id="PRO_0000316045" evidence="1">
    <location>
        <begin position="22"/>
        <end position="63"/>
    </location>
</feature>
<feature type="chain" id="PRO_1000017753" description="Acid shock protein">
    <location>
        <begin position="64"/>
        <end position="121"/>
    </location>
</feature>
<feature type="region of interest" description="Disordered" evidence="2">
    <location>
        <begin position="40"/>
        <end position="121"/>
    </location>
</feature>
<feature type="compositionally biased region" description="Basic residues" evidence="2">
    <location>
        <begin position="84"/>
        <end position="93"/>
    </location>
</feature>
<feature type="compositionally biased region" description="Low complexity" evidence="2">
    <location>
        <begin position="94"/>
        <end position="103"/>
    </location>
</feature>
<feature type="compositionally biased region" description="Basic residues" evidence="2">
    <location>
        <begin position="104"/>
        <end position="113"/>
    </location>
</feature>
<gene>
    <name evidence="1" type="primary">asr</name>
    <name type="ordered locus">YPA_2380</name>
</gene>
<dbReference type="EMBL" id="CP000308">
    <property type="protein sequence ID" value="ABG14345.1"/>
    <property type="molecule type" value="Genomic_DNA"/>
</dbReference>
<dbReference type="RefSeq" id="WP_002212215.1">
    <property type="nucleotide sequence ID" value="NZ_CP009906.1"/>
</dbReference>
<dbReference type="GeneID" id="57976040"/>
<dbReference type="KEGG" id="ypa:YPA_2380"/>
<dbReference type="Proteomes" id="UP000001971">
    <property type="component" value="Chromosome"/>
</dbReference>
<dbReference type="GO" id="GO:0042597">
    <property type="term" value="C:periplasmic space"/>
    <property type="evidence" value="ECO:0007669"/>
    <property type="project" value="UniProtKB-SubCell"/>
</dbReference>
<dbReference type="HAMAP" id="MF_00546">
    <property type="entry name" value="Asr"/>
    <property type="match status" value="1"/>
</dbReference>
<dbReference type="InterPro" id="IPR023497">
    <property type="entry name" value="Acid_shock"/>
</dbReference>
<dbReference type="NCBIfam" id="NF033636">
    <property type="entry name" value="acid_shock_Asr"/>
    <property type="match status" value="1"/>
</dbReference>
<dbReference type="Pfam" id="PF06392">
    <property type="entry name" value="Asr"/>
    <property type="match status" value="1"/>
</dbReference>
<keyword id="KW-0574">Periplasm</keyword>
<keyword id="KW-0732">Signal</keyword>
<evidence type="ECO:0000255" key="1">
    <source>
        <dbReference type="HAMAP-Rule" id="MF_00546"/>
    </source>
</evidence>
<evidence type="ECO:0000256" key="2">
    <source>
        <dbReference type="SAM" id="MobiDB-lite"/>
    </source>
</evidence>
<reference key="1">
    <citation type="journal article" date="2006" name="J. Bacteriol.">
        <title>Complete genome sequence of Yersinia pestis strains Antiqua and Nepal516: evidence of gene reduction in an emerging pathogen.</title>
        <authorList>
            <person name="Chain P.S.G."/>
            <person name="Hu P."/>
            <person name="Malfatti S.A."/>
            <person name="Radnedge L."/>
            <person name="Larimer F."/>
            <person name="Vergez L.M."/>
            <person name="Worsham P."/>
            <person name="Chu M.C."/>
            <person name="Andersen G.L."/>
        </authorList>
    </citation>
    <scope>NUCLEOTIDE SEQUENCE [LARGE SCALE GENOMIC DNA]</scope>
    <source>
        <strain>Antiqua</strain>
    </source>
</reference>